<gene>
    <name evidence="1" type="primary">rplR</name>
    <name type="ordered locus">Cphamn1_2280</name>
</gene>
<dbReference type="EMBL" id="CP001101">
    <property type="protein sequence ID" value="ACE05184.1"/>
    <property type="molecule type" value="Genomic_DNA"/>
</dbReference>
<dbReference type="SMR" id="B3EP45"/>
<dbReference type="STRING" id="331678.Cphamn1_2280"/>
<dbReference type="KEGG" id="cpb:Cphamn1_2280"/>
<dbReference type="eggNOG" id="COG0256">
    <property type="taxonomic scope" value="Bacteria"/>
</dbReference>
<dbReference type="HOGENOM" id="CLU_098841_0_1_10"/>
<dbReference type="OrthoDB" id="9810939at2"/>
<dbReference type="GO" id="GO:0022625">
    <property type="term" value="C:cytosolic large ribosomal subunit"/>
    <property type="evidence" value="ECO:0007669"/>
    <property type="project" value="TreeGrafter"/>
</dbReference>
<dbReference type="GO" id="GO:0008097">
    <property type="term" value="F:5S rRNA binding"/>
    <property type="evidence" value="ECO:0007669"/>
    <property type="project" value="TreeGrafter"/>
</dbReference>
<dbReference type="GO" id="GO:0003735">
    <property type="term" value="F:structural constituent of ribosome"/>
    <property type="evidence" value="ECO:0007669"/>
    <property type="project" value="InterPro"/>
</dbReference>
<dbReference type="GO" id="GO:0006412">
    <property type="term" value="P:translation"/>
    <property type="evidence" value="ECO:0007669"/>
    <property type="project" value="UniProtKB-UniRule"/>
</dbReference>
<dbReference type="CDD" id="cd00432">
    <property type="entry name" value="Ribosomal_L18_L5e"/>
    <property type="match status" value="1"/>
</dbReference>
<dbReference type="FunFam" id="3.30.420.100:FF:000001">
    <property type="entry name" value="50S ribosomal protein L18"/>
    <property type="match status" value="1"/>
</dbReference>
<dbReference type="Gene3D" id="3.30.420.100">
    <property type="match status" value="1"/>
</dbReference>
<dbReference type="HAMAP" id="MF_01337_B">
    <property type="entry name" value="Ribosomal_uL18_B"/>
    <property type="match status" value="1"/>
</dbReference>
<dbReference type="InterPro" id="IPR004389">
    <property type="entry name" value="Ribosomal_uL18_bac-type"/>
</dbReference>
<dbReference type="InterPro" id="IPR005484">
    <property type="entry name" value="Ribosomal_uL18_bac/euk"/>
</dbReference>
<dbReference type="NCBIfam" id="TIGR00060">
    <property type="entry name" value="L18_bact"/>
    <property type="match status" value="1"/>
</dbReference>
<dbReference type="PANTHER" id="PTHR12899">
    <property type="entry name" value="39S RIBOSOMAL PROTEIN L18, MITOCHONDRIAL"/>
    <property type="match status" value="1"/>
</dbReference>
<dbReference type="PANTHER" id="PTHR12899:SF3">
    <property type="entry name" value="LARGE RIBOSOMAL SUBUNIT PROTEIN UL18M"/>
    <property type="match status" value="1"/>
</dbReference>
<dbReference type="Pfam" id="PF00861">
    <property type="entry name" value="Ribosomal_L18p"/>
    <property type="match status" value="1"/>
</dbReference>
<dbReference type="SUPFAM" id="SSF53137">
    <property type="entry name" value="Translational machinery components"/>
    <property type="match status" value="1"/>
</dbReference>
<feature type="chain" id="PRO_1000142638" description="Large ribosomal subunit protein uL18">
    <location>
        <begin position="1"/>
        <end position="119"/>
    </location>
</feature>
<feature type="region of interest" description="Disordered" evidence="2">
    <location>
        <begin position="1"/>
        <end position="22"/>
    </location>
</feature>
<feature type="compositionally biased region" description="Basic residues" evidence="2">
    <location>
        <begin position="8"/>
        <end position="19"/>
    </location>
</feature>
<sequence length="119" mass="13125">MGHVEKVARRHKIKTRSKARGQGTVEKPRLCVFRSLSQIYVQLVDDVNGAILLSVSSMSKENKGLKGTKCDISRTIGKQIGEKAVQKGITKVVFDRNGFRYHGRVQALADGAREAGLVF</sequence>
<comment type="function">
    <text evidence="1">This is one of the proteins that bind and probably mediate the attachment of the 5S RNA into the large ribosomal subunit, where it forms part of the central protuberance.</text>
</comment>
<comment type="subunit">
    <text evidence="1">Part of the 50S ribosomal subunit; part of the 5S rRNA/L5/L18/L25 subcomplex. Contacts the 5S and 23S rRNAs.</text>
</comment>
<comment type="similarity">
    <text evidence="1">Belongs to the universal ribosomal protein uL18 family.</text>
</comment>
<organism>
    <name type="scientific">Chlorobium phaeobacteroides (strain BS1)</name>
    <dbReference type="NCBI Taxonomy" id="331678"/>
    <lineage>
        <taxon>Bacteria</taxon>
        <taxon>Pseudomonadati</taxon>
        <taxon>Chlorobiota</taxon>
        <taxon>Chlorobiia</taxon>
        <taxon>Chlorobiales</taxon>
        <taxon>Chlorobiaceae</taxon>
        <taxon>Chlorobium/Pelodictyon group</taxon>
        <taxon>Chlorobium</taxon>
    </lineage>
</organism>
<accession>B3EP45</accession>
<protein>
    <recommendedName>
        <fullName evidence="1">Large ribosomal subunit protein uL18</fullName>
    </recommendedName>
    <alternativeName>
        <fullName evidence="3">50S ribosomal protein L18</fullName>
    </alternativeName>
</protein>
<keyword id="KW-0687">Ribonucleoprotein</keyword>
<keyword id="KW-0689">Ribosomal protein</keyword>
<keyword id="KW-0694">RNA-binding</keyword>
<keyword id="KW-0699">rRNA-binding</keyword>
<proteinExistence type="inferred from homology"/>
<evidence type="ECO:0000255" key="1">
    <source>
        <dbReference type="HAMAP-Rule" id="MF_01337"/>
    </source>
</evidence>
<evidence type="ECO:0000256" key="2">
    <source>
        <dbReference type="SAM" id="MobiDB-lite"/>
    </source>
</evidence>
<evidence type="ECO:0000305" key="3"/>
<reference key="1">
    <citation type="submission" date="2008-06" db="EMBL/GenBank/DDBJ databases">
        <title>Complete sequence of Chlorobium phaeobacteroides BS1.</title>
        <authorList>
            <consortium name="US DOE Joint Genome Institute"/>
            <person name="Lucas S."/>
            <person name="Copeland A."/>
            <person name="Lapidus A."/>
            <person name="Glavina del Rio T."/>
            <person name="Dalin E."/>
            <person name="Tice H."/>
            <person name="Bruce D."/>
            <person name="Goodwin L."/>
            <person name="Pitluck S."/>
            <person name="Schmutz J."/>
            <person name="Larimer F."/>
            <person name="Land M."/>
            <person name="Hauser L."/>
            <person name="Kyrpides N."/>
            <person name="Ovchinnikova G."/>
            <person name="Li T."/>
            <person name="Liu Z."/>
            <person name="Zhao F."/>
            <person name="Overmann J."/>
            <person name="Bryant D.A."/>
            <person name="Richardson P."/>
        </authorList>
    </citation>
    <scope>NUCLEOTIDE SEQUENCE [LARGE SCALE GENOMIC DNA]</scope>
    <source>
        <strain>BS1</strain>
    </source>
</reference>
<name>RL18_CHLPB</name>